<reference key="1">
    <citation type="journal article" date="2002" name="J. Gen. Virol.">
        <title>Sequence of the 3'-terminal end (8.1 kb) of the genome of porcine haemagglutinating encephalomyelitis virus: comparison with other haemagglutinating coronaviruses.</title>
        <authorList>
            <person name="Sasseville A.M.-J."/>
            <person name="Boutin M."/>
            <person name="Gelinas A.-M."/>
            <person name="Dea S."/>
        </authorList>
    </citation>
    <scope>NUCLEOTIDE SEQUENCE [GENOMIC RNA]</scope>
</reference>
<feature type="chain" id="PRO_0000106011" description="Nucleoprotein">
    <location>
        <begin position="1"/>
        <end position="449"/>
    </location>
</feature>
<feature type="domain" description="CoV N NTD" evidence="3">
    <location>
        <begin position="61"/>
        <end position="190"/>
    </location>
</feature>
<feature type="domain" description="CoV N CTD" evidence="4">
    <location>
        <begin position="259"/>
        <end position="384"/>
    </location>
</feature>
<feature type="region of interest" description="Disordered" evidence="5">
    <location>
        <begin position="1"/>
        <end position="55"/>
    </location>
</feature>
<feature type="region of interest" description="RNA-binding" evidence="2">
    <location>
        <begin position="52"/>
        <end position="194"/>
    </location>
</feature>
<feature type="region of interest" description="Disordered" evidence="5">
    <location>
        <begin position="158"/>
        <end position="231"/>
    </location>
</feature>
<feature type="region of interest" description="Dimerization" evidence="2">
    <location>
        <begin position="266"/>
        <end position="385"/>
    </location>
</feature>
<feature type="region of interest" description="Disordered" evidence="5">
    <location>
        <begin position="266"/>
        <end position="297"/>
    </location>
</feature>
<feature type="region of interest" description="Disordered" evidence="5">
    <location>
        <begin position="387"/>
        <end position="449"/>
    </location>
</feature>
<feature type="compositionally biased region" description="Low complexity" evidence="5">
    <location>
        <begin position="9"/>
        <end position="22"/>
    </location>
</feature>
<feature type="compositionally biased region" description="Polar residues" evidence="5">
    <location>
        <begin position="29"/>
        <end position="38"/>
    </location>
</feature>
<feature type="compositionally biased region" description="Polar residues" evidence="5">
    <location>
        <begin position="45"/>
        <end position="55"/>
    </location>
</feature>
<feature type="compositionally biased region" description="Polar residues" evidence="5">
    <location>
        <begin position="194"/>
        <end position="204"/>
    </location>
</feature>
<feature type="compositionally biased region" description="Polar residues" evidence="5">
    <location>
        <begin position="212"/>
        <end position="227"/>
    </location>
</feature>
<feature type="compositionally biased region" description="Basic residues" evidence="5">
    <location>
        <begin position="266"/>
        <end position="276"/>
    </location>
</feature>
<feature type="compositionally biased region" description="Polar residues" evidence="5">
    <location>
        <begin position="400"/>
        <end position="410"/>
    </location>
</feature>
<feature type="compositionally biased region" description="Basic and acidic residues" evidence="5">
    <location>
        <begin position="423"/>
        <end position="440"/>
    </location>
</feature>
<feature type="binding site" evidence="1">
    <location>
        <position position="106"/>
    </location>
    <ligand>
        <name>RNA</name>
        <dbReference type="ChEBI" id="CHEBI:33697"/>
    </ligand>
</feature>
<feature type="binding site" evidence="1">
    <location>
        <position position="122"/>
    </location>
    <ligand>
        <name>RNA</name>
        <dbReference type="ChEBI" id="CHEBI:33697"/>
    </ligand>
</feature>
<feature type="binding site" evidence="1">
    <location>
        <position position="164"/>
    </location>
    <ligand>
        <name>RNA</name>
        <dbReference type="ChEBI" id="CHEBI:33697"/>
    </ligand>
</feature>
<feature type="modified residue" description="Phosphoserine; by host" evidence="2">
    <location>
        <position position="167"/>
    </location>
</feature>
<feature type="modified residue" description="Phosphothreonine; by host" evidence="2">
    <location>
        <position position="174"/>
    </location>
</feature>
<feature type="modified residue" description="Phosphoserine; by host" evidence="2">
    <location>
        <position position="191"/>
    </location>
</feature>
<feature type="modified residue" description="Phosphoserine; by host" evidence="2">
    <location>
        <position position="391"/>
    </location>
</feature>
<feature type="modified residue" description="Phosphoserine; by host" evidence="2">
    <location>
        <position position="424"/>
    </location>
</feature>
<feature type="modified residue" description="Phosphothreonine; by host" evidence="2">
    <location>
        <position position="428"/>
    </location>
</feature>
<keyword id="KW-0013">ADP-ribosylation</keyword>
<keyword id="KW-1040">Host Golgi apparatus</keyword>
<keyword id="KW-0597">Phosphoprotein</keyword>
<keyword id="KW-1185">Reference proteome</keyword>
<keyword id="KW-0687">Ribonucleoprotein</keyword>
<keyword id="KW-0694">RNA-binding</keyword>
<keyword id="KW-0804">Transcription</keyword>
<keyword id="KW-0805">Transcription regulation</keyword>
<keyword id="KW-0543">Viral nucleoprotein</keyword>
<keyword id="KW-0946">Virion</keyword>
<protein>
    <recommendedName>
        <fullName evidence="2">Nucleoprotein</fullName>
    </recommendedName>
    <alternativeName>
        <fullName evidence="2">Nucleocapsid protein</fullName>
        <shortName evidence="2">NC</shortName>
        <shortName evidence="2">Protein N</shortName>
    </alternativeName>
</protein>
<comment type="function">
    <text evidence="2">Packages the positive strand viral genome RNA into a helical ribonucleocapsid (RNP) and plays a fundamental role during virion assembly through its interactions with the viral genome and membrane protein M. Plays an important role in enhancing the efficiency of subgenomic viral RNA transcription as well as viral replication.</text>
</comment>
<comment type="subunit">
    <text evidence="2">Homooligomer. Both monomeric and oligomeric forms interact with RNA. Interacts with protein M. Interacts with NSP3; this interaction serves to tether the genome to the newly translated replicase-transcriptase complex at a very early stage of infection.</text>
</comment>
<comment type="subcellular location">
    <subcellularLocation>
        <location evidence="2">Virion</location>
    </subcellularLocation>
    <subcellularLocation>
        <location evidence="2">Host endoplasmic reticulum-Golgi intermediate compartment</location>
    </subcellularLocation>
    <subcellularLocation>
        <location evidence="2">Host Golgi apparatus</location>
    </subcellularLocation>
    <text evidence="2">Located inside the virion, complexed with the viral RNA. Probably associates with ER-derived membranes where it participates in viral RNA synthesis and virus budding.</text>
</comment>
<comment type="PTM">
    <text evidence="2">ADP-ribosylated. The ADP-ribosylation is retained in the virion during infection.</text>
</comment>
<comment type="PTM">
    <text evidence="2">Phosphorylated on serine and threonine residues.</text>
</comment>
<comment type="similarity">
    <text evidence="2">Belongs to the betacoronavirus nucleocapsid protein family.</text>
</comment>
<accession>Q8BB23</accession>
<proteinExistence type="inferred from homology"/>
<evidence type="ECO:0000250" key="1">
    <source>
        <dbReference type="UniProtKB" id="P0DTC9"/>
    </source>
</evidence>
<evidence type="ECO:0000255" key="2">
    <source>
        <dbReference type="HAMAP-Rule" id="MF_04096"/>
    </source>
</evidence>
<evidence type="ECO:0000255" key="3">
    <source>
        <dbReference type="PROSITE-ProRule" id="PRU01276"/>
    </source>
</evidence>
<evidence type="ECO:0000255" key="4">
    <source>
        <dbReference type="PROSITE-ProRule" id="PRU01277"/>
    </source>
</evidence>
<evidence type="ECO:0000256" key="5">
    <source>
        <dbReference type="SAM" id="MobiDB-lite"/>
    </source>
</evidence>
<dbReference type="EMBL" id="AY078417">
    <property type="protein sequence ID" value="AAL80036.1"/>
    <property type="molecule type" value="Genomic_RNA"/>
</dbReference>
<dbReference type="SMR" id="Q8BB23"/>
<dbReference type="Proteomes" id="UP000007546">
    <property type="component" value="Genome"/>
</dbReference>
<dbReference type="GO" id="GO:0044172">
    <property type="term" value="C:host cell endoplasmic reticulum-Golgi intermediate compartment"/>
    <property type="evidence" value="ECO:0007669"/>
    <property type="project" value="UniProtKB-SubCell"/>
</dbReference>
<dbReference type="GO" id="GO:0044177">
    <property type="term" value="C:host cell Golgi apparatus"/>
    <property type="evidence" value="ECO:0007669"/>
    <property type="project" value="UniProtKB-SubCell"/>
</dbReference>
<dbReference type="GO" id="GO:1990904">
    <property type="term" value="C:ribonucleoprotein complex"/>
    <property type="evidence" value="ECO:0007669"/>
    <property type="project" value="UniProtKB-KW"/>
</dbReference>
<dbReference type="GO" id="GO:0019013">
    <property type="term" value="C:viral nucleocapsid"/>
    <property type="evidence" value="ECO:0007669"/>
    <property type="project" value="UniProtKB-UniRule"/>
</dbReference>
<dbReference type="GO" id="GO:0003723">
    <property type="term" value="F:RNA binding"/>
    <property type="evidence" value="ECO:0007669"/>
    <property type="project" value="UniProtKB-UniRule"/>
</dbReference>
<dbReference type="CDD" id="cd21595">
    <property type="entry name" value="CoV_N-CTD"/>
    <property type="match status" value="1"/>
</dbReference>
<dbReference type="CDD" id="cd21554">
    <property type="entry name" value="CoV_N-NTD"/>
    <property type="match status" value="1"/>
</dbReference>
<dbReference type="HAMAP" id="MF_04096">
    <property type="entry name" value="BETA_CORONA_NCAP"/>
    <property type="match status" value="1"/>
</dbReference>
<dbReference type="InterPro" id="IPR044344">
    <property type="entry name" value="N_prot_C_CoV"/>
</dbReference>
<dbReference type="InterPro" id="IPR044345">
    <property type="entry name" value="N_prot_N_CoV"/>
</dbReference>
<dbReference type="InterPro" id="IPR043505">
    <property type="entry name" value="NCAP_bCoV"/>
</dbReference>
<dbReference type="InterPro" id="IPR001218">
    <property type="entry name" value="Nucleocap_CoV"/>
</dbReference>
<dbReference type="InterPro" id="IPR037179">
    <property type="entry name" value="Nucleocapsid_C"/>
</dbReference>
<dbReference type="InterPro" id="IPR037195">
    <property type="entry name" value="Nucleocapsid_N"/>
</dbReference>
<dbReference type="Pfam" id="PF00937">
    <property type="entry name" value="CoV_nucleocap"/>
    <property type="match status" value="1"/>
</dbReference>
<dbReference type="PIRSF" id="PIRSF003888">
    <property type="entry name" value="Corona_nucleocap"/>
    <property type="match status" value="1"/>
</dbReference>
<dbReference type="SUPFAM" id="SSF110304">
    <property type="entry name" value="Coronavirus RNA-binding domain"/>
    <property type="match status" value="1"/>
</dbReference>
<dbReference type="SUPFAM" id="SSF103068">
    <property type="entry name" value="Nucleocapsid protein dimerization domain"/>
    <property type="match status" value="1"/>
</dbReference>
<dbReference type="PROSITE" id="PS51929">
    <property type="entry name" value="COV_N_CTD"/>
    <property type="match status" value="1"/>
</dbReference>
<dbReference type="PROSITE" id="PS51928">
    <property type="entry name" value="COV_N_NTD"/>
    <property type="match status" value="1"/>
</dbReference>
<sequence>MSFTPGKQSSSRASSGNRSGNGILKWADQSDQSRNVQTRGRRVQSKQTATSQQPSGGTVVPYYSWFSGITQFQKGKEFEFAEGQGVPIAPGVPSTEAKGYWYRHNRRSFKTADGNQRQLLPRWYFYYLGTGPHAKDQYGTDIDGVFWVASNQADINTPADIVDRDPSSDEAIPTRFPPGTVLPQGYYIEGSGRSAPNSRSTSRAPNRAPSAGSRSRANSGNRTSTPGVTPDMADQIASLVLAKLGKDATKPQQVTKQTAKEVRQKILNKPRQKRSPNKQCTVQQCFGKRGPNQNFGGGEMLKLGTSDPQFPILAELAPTAGAFFFGSRLELAKVQNLSGNPDEPQKDVYELRYNGAIRFDSTLSGFETIMKVLNQNLNAYQHQEDGMMNISPKPQRQRGQKNGQVENDNVSVAAPKSRVQQNKSRELTAEDISLLKKMDEPYTEDTSEI</sequence>
<organismHost>
    <name type="scientific">Sus scrofa</name>
    <name type="common">Pig</name>
    <dbReference type="NCBI Taxonomy" id="9823"/>
</organismHost>
<organism>
    <name type="scientific">Porcine hemagglutinating encephalomyelitis virus (strain 67N)</name>
    <name type="common">HEV-67N</name>
    <dbReference type="NCBI Taxonomy" id="230237"/>
    <lineage>
        <taxon>Viruses</taxon>
        <taxon>Riboviria</taxon>
        <taxon>Orthornavirae</taxon>
        <taxon>Pisuviricota</taxon>
        <taxon>Pisoniviricetes</taxon>
        <taxon>Nidovirales</taxon>
        <taxon>Cornidovirineae</taxon>
        <taxon>Coronaviridae</taxon>
        <taxon>Orthocoronavirinae</taxon>
        <taxon>Betacoronavirus</taxon>
        <taxon>Embecovirus</taxon>
        <taxon>Betacoronavirus 1</taxon>
    </lineage>
</organism>
<gene>
    <name evidence="2" type="primary">N</name>
</gene>
<name>NCAP_CVP67</name>